<sequence>MGAQVSTQKTGAHETGLNASGNSIIHYTNINYYKDAASNSANRQDFTQDPSKFTEPVKDIMIKSLPALNSPTVEECGYSDRVRSITLGNSTITTQECANVVVGYGVWPDYLKDSEATAEDQPTQPDVATCRFYTLDSVQWQKTSPGWWWKLPDALSNLGLFGQNMQYHYLGRTGYTIHVQCNASKFHQGCLLVVCVPEAEMGCATLNNTPSSAELLGGDSAKEFADKPVASGSNKLVQRVVYNAGMGVGVGNLTIFPHQWINLRTNNSATIVMPYTNSVPMDNMFRHNNVTLMVIPFVPLDYCPGSTTYVPITITIAPMCAEYNGLRLAGHQGLPTMNTPGSCQFLTSDDFQSPSAMPQYDVTPEMRIPGEVKNLMEIAEVDSVVPVQNVGEKVNSMEAYQIPVRSNEGSGTQVFGFPLQPGYSSVFSRTLLGEILNYYTHWSGSIKLTFMFCGSAMATGKFLLAYSPPGAGAPTKRVDAMLGTHVVWDVGLQSSCVLCIPWISQTHYRYVASDEYTAGGFITCWYQTNIVVPADAQSSCYIMCFVSACNDFSVRLLKDTPFISQQNFFQGPVEDAITAAIGRVADTVGTGPTNSEAIPALTAAETGHTSQVVPSDTMQTRHVKNYHSRSESTIENFLCRSACVYFTEYENSGAKRYAEWVITPRQAAQLRRKLEFFTYVRFDLELTFVITSTQQPSTTQNQDAQILTHQIMYVPPGGPVPDKVDSYVWQTSTNPSVFWTEGNAPPRMSVPFLSIGNAYSNFYDGWSEFSRNGVYGINTLNNMGTLYARHVNAGSTGPIKSTIRIYFKPKHVKAWIPRPPRLCQYEKAKNVNFQPSGVTTTRQSITTMTNTGAFGQQSGAVYVGNYRVVNRHLATSADWQNCVWENYNRDLLVSTTTAHGCDIIARCRCTTGVYFCASKNKHYPISFEGPGIVEVQESEYYPRRYQSHVLLAAGFSEPGDCGGILRCEHGVIGIVTMGGEGVVGFADIRDLLWLEDDAMEQGVKDYVEQLGNAFGSGFTNQICEQVNLLKESLVGQDSILEKSLKALVKIISALVIVVRNHDDLITVTATLALIGCTSSPWRWLKQKVSQYYGIPMAERQNNGWLKKFTEMTNACKGMEWIAIKIQKFIEWLKVKILPEVREKHEFLNRLKQLPLLESQIATIEQSAPSQSDQEQLFSNVQYFAHYCRKYAPLYASEAKRVFSLEKKMSNYIQFKSKCRIEPVCLLLHGSPGAGKSVATNLIGRSLAEKLNSSVYSLPPDPDHFDGYKQQAVVIMDDLCQKPDGKDVSLFCQMVSSVDFVPPMAALEEKGILFTSPFVLASTNAGSINAPTVSDSRALARRFHFDMNIEVISMYSQNGKINMPMSVKTCDEECCPVNFKKCCPLVCGKAIQFIDRRTQVRYSLDMLVTEMFREYNHRHSVGATLEALFQGPPVYREIKISVAPETPPPPRIADLLKSVDSEAVREYCKEKGWLVPEVNSTLQIEKHVSRAFICLQAITTFVSVAGIIYIIYKLFAGFQGAYTGIPNQKPKVPTLRQAKVQGPAFEFAVAMMKRNSSTVKTEYGEFTMLGIYDRWAVLPRHAKPGPTILMNDQEVGVLDAKELVDKDGTNLELTLLKLNRNEKFRDIRGFLAKEEVEVNEAVLAINTSKFPNMYIPVGQVTDYGFLNLGGTPTKRMLMYNFPTRAGQCGGVLMSTGKVLGIHVGGNGHQGFSAALLKHYFNDEQGEIEFIESSKEAGFPIINTPSKTKLEPSVFHQVFEGDKEPAVLRNGDPRLKVNFEEAIFSKYIGNVNTHVDEYMMEAVDHYAGQLATLDISTEPMKLEDAVYGTEGLEALDLTTSAGYPYVALGIKKRDILSKKTRDLTKLKECMDKYGLNLPMVTYVKDELRSAEKVAKGKSRLIEASSLNDSVAMRQTFGNLYKTFHLNPGVVTGSAVGCDPDLFWSKIPVMLDGHLIAFDYSGYDASLSPVWFACLKLLLEKLGYSHKETNYIDYLCNSHHLYRDKHYFVRGGMPSGCSGTSIFNSMINNIIIRTLMLKVYKGIDLDQFRMIAYGDDVIASYPWPIDASLLAEAGKDYGLIMTPADKGECFNEVTWTNVTFLKRYFRADEQYPFLVHPVMPMKDIHESIRWTKDPKNTQDHVRSLCLLAWHNGEHEYEEFIRKIRSVPVGRCLTLPAFSTIRRKWLDSF</sequence>
<protein>
    <recommendedName>
        <fullName>Genome polyprotein</fullName>
    </recommendedName>
    <component>
        <recommendedName>
            <fullName>P1</fullName>
        </recommendedName>
    </component>
    <component>
        <recommendedName>
            <fullName>Capsid protein VP0</fullName>
        </recommendedName>
        <alternativeName>
            <fullName>VP4-VP2</fullName>
        </alternativeName>
    </component>
    <component>
        <recommendedName>
            <fullName>Capsid protein VP4</fullName>
        </recommendedName>
        <alternativeName>
            <fullName>P1A</fullName>
        </alternativeName>
        <alternativeName>
            <fullName>Virion protein 4</fullName>
        </alternativeName>
    </component>
    <component>
        <recommendedName>
            <fullName>Capsid protein VP2</fullName>
        </recommendedName>
        <alternativeName>
            <fullName>P1B</fullName>
        </alternativeName>
        <alternativeName>
            <fullName>Virion protein 2</fullName>
        </alternativeName>
    </component>
    <component>
        <recommendedName>
            <fullName>Capsid protein VP3</fullName>
        </recommendedName>
        <alternativeName>
            <fullName>P1C</fullName>
        </alternativeName>
        <alternativeName>
            <fullName>Virion protein 3</fullName>
        </alternativeName>
    </component>
    <component>
        <recommendedName>
            <fullName>Capsid protein VP1</fullName>
        </recommendedName>
        <alternativeName>
            <fullName>P1D</fullName>
        </alternativeName>
        <alternativeName>
            <fullName>Virion protein 1</fullName>
        </alternativeName>
    </component>
    <component>
        <recommendedName>
            <fullName>P2</fullName>
        </recommendedName>
    </component>
    <component>
        <recommendedName>
            <fullName>Protease 2A</fullName>
            <shortName>P2A</shortName>
            <ecNumber evidence="2">3.4.22.29</ecNumber>
        </recommendedName>
        <alternativeName>
            <fullName>Picornain 2A</fullName>
        </alternativeName>
        <alternativeName>
            <fullName>Protein 2A</fullName>
        </alternativeName>
    </component>
    <component>
        <recommendedName>
            <fullName>Protein 2B</fullName>
            <shortName>P2B</shortName>
        </recommendedName>
    </component>
    <component>
        <recommendedName>
            <fullName>Protein 2C</fullName>
            <shortName>P2C</shortName>
            <ecNumber evidence="2">3.6.1.15</ecNumber>
        </recommendedName>
    </component>
    <component>
        <recommendedName>
            <fullName>P3</fullName>
        </recommendedName>
    </component>
    <component>
        <recommendedName>
            <fullName>Protein 3AB</fullName>
        </recommendedName>
    </component>
    <component>
        <recommendedName>
            <fullName>Protein 3A</fullName>
            <shortName>P3A</shortName>
        </recommendedName>
    </component>
    <component>
        <recommendedName>
            <fullName>Viral protein genome-linked</fullName>
            <shortName>VPg</shortName>
        </recommendedName>
        <alternativeName>
            <fullName>Protein 3B</fullName>
            <shortName>P3B</shortName>
        </alternativeName>
    </component>
    <component>
        <recommendedName>
            <fullName>Protein 3CD</fullName>
            <ecNumber>3.4.22.28</ecNumber>
        </recommendedName>
    </component>
    <component>
        <recommendedName>
            <fullName evidence="12">Protease 3C</fullName>
            <ecNumber evidence="12">3.4.22.28</ecNumber>
        </recommendedName>
        <alternativeName>
            <fullName evidence="12">Picornain 3C</fullName>
            <shortName evidence="12">P3C</shortName>
        </alternativeName>
    </component>
    <component>
        <recommendedName>
            <fullName evidence="10">RNA-directed RNA polymerase</fullName>
            <shortName>RdRp</shortName>
            <ecNumber evidence="10">2.7.7.48</ecNumber>
        </recommendedName>
        <alternativeName>
            <fullName>3D polymerase</fullName>
            <shortName>3Dpol</shortName>
        </alternativeName>
        <alternativeName>
            <fullName>Protein 3D</fullName>
            <shortName>3D</shortName>
        </alternativeName>
    </component>
</protein>
<reference key="1">
    <citation type="submission" date="1996-04" db="EMBL/GenBank/DDBJ databases">
        <title>A mutation in the puff region of VP2 attenuates the myocarditic phenotype of an infectious cDNA of the Woodruff virus.</title>
        <authorList>
            <person name="Knowlton K.U."/>
            <person name="Jeon E.S."/>
            <person name="Berkley R.W."/>
            <person name="Wessely R."/>
            <person name="Huber S."/>
        </authorList>
    </citation>
    <scope>NUCLEOTIDE SEQUENCE [GENOMIC RNA]</scope>
</reference>
<reference key="2">
    <citation type="journal article" date="1995" name="Structure">
        <title>The structure of coxsackievirus B3 at 3.5 A resolution.</title>
        <authorList>
            <person name="Muckelbauer J.K."/>
            <person name="Kremer M."/>
            <person name="Minor I."/>
            <person name="Diana G."/>
            <person name="Dutko F.J."/>
            <person name="Groarke J."/>
            <person name="Pevear D.C."/>
            <person name="Rossmann M.G."/>
        </authorList>
    </citation>
    <scope>STRUCTURE BY ELECTRON MICROSCOPY (3.5 ANGSTROMS) OF 70-851</scope>
    <scope>MYRISTOYLATION AT GLY-2</scope>
</reference>
<keyword id="KW-0002">3D-structure</keyword>
<keyword id="KW-1072">Activation of host autophagy by virus</keyword>
<keyword id="KW-0067">ATP-binding</keyword>
<keyword id="KW-0068">Autocatalytic cleavage</keyword>
<keyword id="KW-0167">Capsid protein</keyword>
<keyword id="KW-0191">Covalent protein-RNA linkage</keyword>
<keyword id="KW-0235">DNA replication</keyword>
<keyword id="KW-1262">Eukaryotic host gene expression shutoff by virus</keyword>
<keyword id="KW-1193">Eukaryotic host translation shutoff by virus</keyword>
<keyword id="KW-0347">Helicase</keyword>
<keyword id="KW-1035">Host cytoplasm</keyword>
<keyword id="KW-1036">Host cytoplasmic vesicle</keyword>
<keyword id="KW-1190">Host gene expression shutoff by virus</keyword>
<keyword id="KW-1043">Host membrane</keyword>
<keyword id="KW-1192">Host mRNA suppression by virus</keyword>
<keyword id="KW-1048">Host nucleus</keyword>
<keyword id="KW-0945">Host-virus interaction</keyword>
<keyword id="KW-0378">Hydrolase</keyword>
<keyword id="KW-1090">Inhibition of host innate immune response by virus</keyword>
<keyword id="KW-1097">Inhibition of host MAVS by virus</keyword>
<keyword id="KW-1089">Inhibition of host MDA5 by virus</keyword>
<keyword id="KW-1099">Inhibition of host mRNA nuclear export by virus</keyword>
<keyword id="KW-1088">Inhibition of host RIG-I by virus</keyword>
<keyword id="KW-1113">Inhibition of host RLR pathway by virus</keyword>
<keyword id="KW-0407">Ion channel</keyword>
<keyword id="KW-0406">Ion transport</keyword>
<keyword id="KW-0449">Lipoprotein</keyword>
<keyword id="KW-0460">Magnesium</keyword>
<keyword id="KW-0472">Membrane</keyword>
<keyword id="KW-0479">Metal-binding</keyword>
<keyword id="KW-0519">Myristate</keyword>
<keyword id="KW-0547">Nucleotide-binding</keyword>
<keyword id="KW-0548">Nucleotidyltransferase</keyword>
<keyword id="KW-0597">Phosphoprotein</keyword>
<keyword id="KW-1172">Pore-mediated penetration of viral genome into host cell</keyword>
<keyword id="KW-0645">Protease</keyword>
<keyword id="KW-0677">Repeat</keyword>
<keyword id="KW-0694">RNA-binding</keyword>
<keyword id="KW-0696">RNA-directed RNA polymerase</keyword>
<keyword id="KW-1143">T=pseudo3 icosahedral capsid protein</keyword>
<keyword id="KW-0788">Thiol protease</keyword>
<keyword id="KW-0808">Transferase</keyword>
<keyword id="KW-0813">Transport</keyword>
<keyword id="KW-1161">Viral attachment to host cell</keyword>
<keyword id="KW-0899">Viral immunoevasion</keyword>
<keyword id="KW-1182">Viral ion channel</keyword>
<keyword id="KW-1162">Viral penetration into host cytoplasm</keyword>
<keyword id="KW-0693">Viral RNA replication</keyword>
<keyword id="KW-0946">Virion</keyword>
<keyword id="KW-1164">Virus endocytosis by host</keyword>
<keyword id="KW-1160">Virus entry into host cell</keyword>
<keyword id="KW-0862">Zinc</keyword>
<keyword id="KW-0863">Zinc-finger</keyword>
<name>POLG_CXB3W</name>
<proteinExistence type="evidence at protein level"/>
<dbReference type="EC" id="3.4.22.29" evidence="2"/>
<dbReference type="EC" id="3.6.1.15" evidence="2"/>
<dbReference type="EC" id="3.4.22.28" evidence="12"/>
<dbReference type="EC" id="2.7.7.48" evidence="10"/>
<dbReference type="EMBL" id="U57056">
    <property type="protein sequence ID" value="AAB02228.1"/>
    <property type="molecule type" value="Genomic_RNA"/>
</dbReference>
<dbReference type="PDB" id="1COV">
    <property type="method" value="X-ray"/>
    <property type="resolution" value="3.50 A"/>
    <property type="chains" value="1=571-851, 2=70-332, 3=333-570, 4=2-69"/>
</dbReference>
<dbReference type="PDB" id="1JEW">
    <property type="method" value="EM"/>
    <property type="resolution" value="22.00 A"/>
    <property type="chains" value="1=571-851, 2=70-332, 3=333-570, 4=2-69"/>
</dbReference>
<dbReference type="PDB" id="3JD7">
    <property type="method" value="EM"/>
    <property type="resolution" value="3.90 A"/>
    <property type="chains" value="1=571-851, 2=70-332, 3=333-570, 4=2-69"/>
</dbReference>
<dbReference type="PDBsum" id="1COV"/>
<dbReference type="PDBsum" id="1JEW"/>
<dbReference type="PDBsum" id="3JD7"/>
<dbReference type="SMR" id="Q66282"/>
<dbReference type="IntAct" id="Q66282">
    <property type="interactions" value="3"/>
</dbReference>
<dbReference type="DrugBank" id="DB08231">
    <property type="generic name" value="Myristic acid"/>
</dbReference>
<dbReference type="MEROPS" id="C03.011"/>
<dbReference type="iPTMnet" id="Q66282"/>
<dbReference type="BRENDA" id="3.4.22.29">
    <property type="organism ID" value="9239"/>
</dbReference>
<dbReference type="EvolutionaryTrace" id="Q66282"/>
<dbReference type="Proteomes" id="UP000007530">
    <property type="component" value="Genome"/>
</dbReference>
<dbReference type="GO" id="GO:0044162">
    <property type="term" value="C:host cell cytoplasmic vesicle membrane"/>
    <property type="evidence" value="ECO:0007669"/>
    <property type="project" value="UniProtKB-SubCell"/>
</dbReference>
<dbReference type="GO" id="GO:0042025">
    <property type="term" value="C:host cell nucleus"/>
    <property type="evidence" value="ECO:0007669"/>
    <property type="project" value="UniProtKB-SubCell"/>
</dbReference>
<dbReference type="GO" id="GO:0016020">
    <property type="term" value="C:membrane"/>
    <property type="evidence" value="ECO:0007669"/>
    <property type="project" value="UniProtKB-KW"/>
</dbReference>
<dbReference type="GO" id="GO:0039618">
    <property type="term" value="C:T=pseudo3 icosahedral viral capsid"/>
    <property type="evidence" value="ECO:0007669"/>
    <property type="project" value="UniProtKB-KW"/>
</dbReference>
<dbReference type="GO" id="GO:0005524">
    <property type="term" value="F:ATP binding"/>
    <property type="evidence" value="ECO:0007669"/>
    <property type="project" value="UniProtKB-KW"/>
</dbReference>
<dbReference type="GO" id="GO:0016887">
    <property type="term" value="F:ATP hydrolysis activity"/>
    <property type="evidence" value="ECO:0007669"/>
    <property type="project" value="InterPro"/>
</dbReference>
<dbReference type="GO" id="GO:0015267">
    <property type="term" value="F:channel activity"/>
    <property type="evidence" value="ECO:0007669"/>
    <property type="project" value="UniProtKB-KW"/>
</dbReference>
<dbReference type="GO" id="GO:0004197">
    <property type="term" value="F:cysteine-type endopeptidase activity"/>
    <property type="evidence" value="ECO:0007669"/>
    <property type="project" value="UniProtKB-EC"/>
</dbReference>
<dbReference type="GO" id="GO:0003723">
    <property type="term" value="F:RNA binding"/>
    <property type="evidence" value="ECO:0007669"/>
    <property type="project" value="UniProtKB-KW"/>
</dbReference>
<dbReference type="GO" id="GO:0003724">
    <property type="term" value="F:RNA helicase activity"/>
    <property type="evidence" value="ECO:0007669"/>
    <property type="project" value="InterPro"/>
</dbReference>
<dbReference type="GO" id="GO:0003968">
    <property type="term" value="F:RNA-directed RNA polymerase activity"/>
    <property type="evidence" value="ECO:0007669"/>
    <property type="project" value="UniProtKB-KW"/>
</dbReference>
<dbReference type="GO" id="GO:0005198">
    <property type="term" value="F:structural molecule activity"/>
    <property type="evidence" value="ECO:0007669"/>
    <property type="project" value="InterPro"/>
</dbReference>
<dbReference type="GO" id="GO:0008270">
    <property type="term" value="F:zinc ion binding"/>
    <property type="evidence" value="ECO:0007669"/>
    <property type="project" value="UniProtKB-KW"/>
</dbReference>
<dbReference type="GO" id="GO:0006260">
    <property type="term" value="P:DNA replication"/>
    <property type="evidence" value="ECO:0007669"/>
    <property type="project" value="UniProtKB-KW"/>
</dbReference>
<dbReference type="GO" id="GO:0006351">
    <property type="term" value="P:DNA-templated transcription"/>
    <property type="evidence" value="ECO:0007669"/>
    <property type="project" value="InterPro"/>
</dbReference>
<dbReference type="GO" id="GO:0075509">
    <property type="term" value="P:endocytosis involved in viral entry into host cell"/>
    <property type="evidence" value="ECO:0007669"/>
    <property type="project" value="UniProtKB-KW"/>
</dbReference>
<dbReference type="GO" id="GO:0034220">
    <property type="term" value="P:monoatomic ion transmembrane transport"/>
    <property type="evidence" value="ECO:0007669"/>
    <property type="project" value="UniProtKB-KW"/>
</dbReference>
<dbReference type="GO" id="GO:0006508">
    <property type="term" value="P:proteolysis"/>
    <property type="evidence" value="ECO:0007669"/>
    <property type="project" value="UniProtKB-KW"/>
</dbReference>
<dbReference type="GO" id="GO:0044694">
    <property type="term" value="P:symbiont genome entry into host cell via pore formation in plasma membrane"/>
    <property type="evidence" value="ECO:0007669"/>
    <property type="project" value="UniProtKB-KW"/>
</dbReference>
<dbReference type="GO" id="GO:0039520">
    <property type="term" value="P:symbiont-mediated activation of host autophagy"/>
    <property type="evidence" value="ECO:0000314"/>
    <property type="project" value="UniProtKB"/>
</dbReference>
<dbReference type="GO" id="GO:0039545">
    <property type="term" value="P:symbiont-mediated suppression of host cytoplasmic pattern recognition receptor signaling pathway via inhibition of MAVS activity"/>
    <property type="evidence" value="ECO:0007669"/>
    <property type="project" value="UniProtKB-KW"/>
</dbReference>
<dbReference type="GO" id="GO:0039554">
    <property type="term" value="P:symbiont-mediated suppression of host cytoplasmic pattern recognition receptor signaling pathway via inhibition of MDA-5 activity"/>
    <property type="evidence" value="ECO:0007669"/>
    <property type="project" value="UniProtKB-KW"/>
</dbReference>
<dbReference type="GO" id="GO:0039540">
    <property type="term" value="P:symbiont-mediated suppression of host cytoplasmic pattern recognition receptor signaling pathway via inhibition of RIG-I activity"/>
    <property type="evidence" value="ECO:0007669"/>
    <property type="project" value="UniProtKB-KW"/>
</dbReference>
<dbReference type="GO" id="GO:0039522">
    <property type="term" value="P:symbiont-mediated suppression of host mRNA export from nucleus"/>
    <property type="evidence" value="ECO:0007669"/>
    <property type="project" value="UniProtKB-KW"/>
</dbReference>
<dbReference type="GO" id="GO:0039694">
    <property type="term" value="P:viral RNA genome replication"/>
    <property type="evidence" value="ECO:0007669"/>
    <property type="project" value="InterPro"/>
</dbReference>
<dbReference type="GO" id="GO:0019062">
    <property type="term" value="P:virion attachment to host cell"/>
    <property type="evidence" value="ECO:0007669"/>
    <property type="project" value="UniProtKB-KW"/>
</dbReference>
<dbReference type="CDD" id="cd23213">
    <property type="entry name" value="Enterovirus_RdRp"/>
    <property type="match status" value="1"/>
</dbReference>
<dbReference type="CDD" id="cd00205">
    <property type="entry name" value="rhv_like"/>
    <property type="match status" value="3"/>
</dbReference>
<dbReference type="FunFam" id="1.20.960.20:FF:000001">
    <property type="entry name" value="Genome polyprotein"/>
    <property type="match status" value="1"/>
</dbReference>
<dbReference type="FunFam" id="2.40.10.10:FF:000018">
    <property type="entry name" value="Genome polyprotein"/>
    <property type="match status" value="1"/>
</dbReference>
<dbReference type="FunFam" id="2.40.10.10:FF:000020">
    <property type="entry name" value="Genome polyprotein"/>
    <property type="match status" value="1"/>
</dbReference>
<dbReference type="FunFam" id="2.40.10.10:FF:000022">
    <property type="entry name" value="Genome polyprotein"/>
    <property type="match status" value="1"/>
</dbReference>
<dbReference type="FunFam" id="2.60.120.20:FF:000001">
    <property type="entry name" value="Genome polyprotein"/>
    <property type="match status" value="1"/>
</dbReference>
<dbReference type="FunFam" id="2.60.120.20:FF:000002">
    <property type="entry name" value="Genome polyprotein"/>
    <property type="match status" value="1"/>
</dbReference>
<dbReference type="FunFam" id="2.60.120.20:FF:000004">
    <property type="entry name" value="Genome polyprotein"/>
    <property type="match status" value="1"/>
</dbReference>
<dbReference type="FunFam" id="3.30.70.270:FF:000008">
    <property type="entry name" value="Genome polyprotein"/>
    <property type="match status" value="1"/>
</dbReference>
<dbReference type="FunFam" id="4.10.80.10:FF:000001">
    <property type="entry name" value="Genome polyprotein"/>
    <property type="match status" value="1"/>
</dbReference>
<dbReference type="FunFam" id="4.10.880.10:FF:000001">
    <property type="entry name" value="Genome polyprotein"/>
    <property type="match status" value="1"/>
</dbReference>
<dbReference type="FunFam" id="4.10.880.10:FF:000002">
    <property type="entry name" value="Genome polyprotein"/>
    <property type="match status" value="1"/>
</dbReference>
<dbReference type="Gene3D" id="1.20.960.20">
    <property type="match status" value="1"/>
</dbReference>
<dbReference type="Gene3D" id="2.60.120.20">
    <property type="match status" value="3"/>
</dbReference>
<dbReference type="Gene3D" id="3.30.70.270">
    <property type="match status" value="1"/>
</dbReference>
<dbReference type="Gene3D" id="4.10.80.10">
    <property type="entry name" value="Picornavirus coat protein VP4"/>
    <property type="match status" value="1"/>
</dbReference>
<dbReference type="Gene3D" id="6.10.20.20">
    <property type="entry name" value="Poliovirus 3A protein-like"/>
    <property type="match status" value="1"/>
</dbReference>
<dbReference type="Gene3D" id="4.10.880.10">
    <property type="entry name" value="Poliovirus 3D polymerase Domain 1 (Nucleotidyltransferase)"/>
    <property type="match status" value="2"/>
</dbReference>
<dbReference type="Gene3D" id="2.40.10.10">
    <property type="entry name" value="Trypsin-like serine proteases"/>
    <property type="match status" value="4"/>
</dbReference>
<dbReference type="InterPro" id="IPR003593">
    <property type="entry name" value="AAA+_ATPase"/>
</dbReference>
<dbReference type="InterPro" id="IPR043502">
    <property type="entry name" value="DNA/RNA_pol_sf"/>
</dbReference>
<dbReference type="InterPro" id="IPR000605">
    <property type="entry name" value="Helicase_SF3_ssDNA/RNA_vir"/>
</dbReference>
<dbReference type="InterPro" id="IPR014759">
    <property type="entry name" value="Helicase_SF3_ssRNA_vir"/>
</dbReference>
<dbReference type="InterPro" id="IPR027417">
    <property type="entry name" value="P-loop_NTPase"/>
</dbReference>
<dbReference type="InterPro" id="IPR014838">
    <property type="entry name" value="P3A"/>
</dbReference>
<dbReference type="InterPro" id="IPR036203">
    <property type="entry name" value="P3A_soluble_dom"/>
</dbReference>
<dbReference type="InterPro" id="IPR044067">
    <property type="entry name" value="PCV_3C_PRO"/>
</dbReference>
<dbReference type="InterPro" id="IPR000081">
    <property type="entry name" value="Peptidase_C3"/>
</dbReference>
<dbReference type="InterPro" id="IPR000199">
    <property type="entry name" value="Peptidase_C3A/C3B_picornavir"/>
</dbReference>
<dbReference type="InterPro" id="IPR009003">
    <property type="entry name" value="Peptidase_S1_PA"/>
</dbReference>
<dbReference type="InterPro" id="IPR043504">
    <property type="entry name" value="Peptidase_S1_PA_chymotrypsin"/>
</dbReference>
<dbReference type="InterPro" id="IPR003138">
    <property type="entry name" value="Pico_P1A"/>
</dbReference>
<dbReference type="InterPro" id="IPR036988">
    <property type="entry name" value="Pico_P1A_sf"/>
</dbReference>
<dbReference type="InterPro" id="IPR002527">
    <property type="entry name" value="Pico_P2B"/>
</dbReference>
<dbReference type="InterPro" id="IPR001676">
    <property type="entry name" value="Picornavirus_capsid"/>
</dbReference>
<dbReference type="InterPro" id="IPR043128">
    <property type="entry name" value="Rev_trsase/Diguanyl_cyclase"/>
</dbReference>
<dbReference type="InterPro" id="IPR033703">
    <property type="entry name" value="Rhv-like"/>
</dbReference>
<dbReference type="InterPro" id="IPR001205">
    <property type="entry name" value="RNA-dir_pol_C"/>
</dbReference>
<dbReference type="InterPro" id="IPR007094">
    <property type="entry name" value="RNA-dir_pol_PSvirus"/>
</dbReference>
<dbReference type="InterPro" id="IPR029053">
    <property type="entry name" value="Viral_coat"/>
</dbReference>
<dbReference type="Pfam" id="PF08727">
    <property type="entry name" value="P3A"/>
    <property type="match status" value="1"/>
</dbReference>
<dbReference type="Pfam" id="PF00548">
    <property type="entry name" value="Peptidase_C3"/>
    <property type="match status" value="1"/>
</dbReference>
<dbReference type="Pfam" id="PF02226">
    <property type="entry name" value="Pico_P1A"/>
    <property type="match status" value="1"/>
</dbReference>
<dbReference type="Pfam" id="PF00947">
    <property type="entry name" value="Pico_P2A"/>
    <property type="match status" value="1"/>
</dbReference>
<dbReference type="Pfam" id="PF01552">
    <property type="entry name" value="Pico_P2B"/>
    <property type="match status" value="1"/>
</dbReference>
<dbReference type="Pfam" id="PF00680">
    <property type="entry name" value="RdRP_1"/>
    <property type="match status" value="1"/>
</dbReference>
<dbReference type="Pfam" id="PF00073">
    <property type="entry name" value="Rhv"/>
    <property type="match status" value="2"/>
</dbReference>
<dbReference type="Pfam" id="PF22663">
    <property type="entry name" value="Rhv_5"/>
    <property type="match status" value="1"/>
</dbReference>
<dbReference type="Pfam" id="PF00910">
    <property type="entry name" value="RNA_helicase"/>
    <property type="match status" value="1"/>
</dbReference>
<dbReference type="SMART" id="SM00382">
    <property type="entry name" value="AAA"/>
    <property type="match status" value="1"/>
</dbReference>
<dbReference type="SUPFAM" id="SSF56672">
    <property type="entry name" value="DNA/RNA polymerases"/>
    <property type="match status" value="1"/>
</dbReference>
<dbReference type="SUPFAM" id="SSF52540">
    <property type="entry name" value="P-loop containing nucleoside triphosphate hydrolases"/>
    <property type="match status" value="1"/>
</dbReference>
<dbReference type="SUPFAM" id="SSF88633">
    <property type="entry name" value="Positive stranded ssRNA viruses"/>
    <property type="match status" value="2"/>
</dbReference>
<dbReference type="SUPFAM" id="SSF89043">
    <property type="entry name" value="Soluble domain of poliovirus core protein 3a"/>
    <property type="match status" value="1"/>
</dbReference>
<dbReference type="SUPFAM" id="SSF50494">
    <property type="entry name" value="Trypsin-like serine proteases"/>
    <property type="match status" value="2"/>
</dbReference>
<dbReference type="PROSITE" id="PS51874">
    <property type="entry name" value="PCV_3C_PRO"/>
    <property type="match status" value="1"/>
</dbReference>
<dbReference type="PROSITE" id="PS50507">
    <property type="entry name" value="RDRP_SSRNA_POS"/>
    <property type="match status" value="1"/>
</dbReference>
<dbReference type="PROSITE" id="PS51218">
    <property type="entry name" value="SF3_HELICASE_2"/>
    <property type="match status" value="1"/>
</dbReference>
<organismHost>
    <name type="scientific">Homo sapiens</name>
    <name type="common">Human</name>
    <dbReference type="NCBI Taxonomy" id="9606"/>
</organismHost>
<organism>
    <name type="scientific">Coxsackievirus B3 (strain Woodruff)</name>
    <dbReference type="NCBI Taxonomy" id="103904"/>
    <lineage>
        <taxon>Viruses</taxon>
        <taxon>Riboviria</taxon>
        <taxon>Orthornavirae</taxon>
        <taxon>Pisuviricota</taxon>
        <taxon>Pisoniviricetes</taxon>
        <taxon>Picornavirales</taxon>
        <taxon>Picornaviridae</taxon>
        <taxon>Ensavirinae</taxon>
        <taxon>Enterovirus</taxon>
        <taxon>Enterovirus B</taxon>
    </lineage>
</organism>
<accession>Q66282</accession>
<feature type="initiator methionine" description="Removed; by host" evidence="2">
    <location>
        <position position="1"/>
    </location>
</feature>
<feature type="chain" id="PRO_0000426281" description="Genome polyprotein">
    <location>
        <begin position="2"/>
        <end position="2185"/>
    </location>
</feature>
<feature type="chain" id="PRO_0000426282" description="P1">
    <location>
        <begin position="2"/>
        <end position="851"/>
    </location>
</feature>
<feature type="chain" id="PRO_0000426283" description="Capsid protein VP0">
    <location>
        <begin position="2"/>
        <end position="332"/>
    </location>
</feature>
<feature type="chain" id="PRO_0000426284" description="Capsid protein VP4">
    <location>
        <begin position="2"/>
        <end position="69"/>
    </location>
</feature>
<feature type="chain" id="PRO_0000426285" description="Capsid protein VP2">
    <location>
        <begin position="70"/>
        <end position="332"/>
    </location>
</feature>
<feature type="chain" id="PRO_0000426286" description="Capsid protein VP3">
    <location>
        <begin position="333"/>
        <end position="570"/>
    </location>
</feature>
<feature type="chain" id="PRO_0000426287" description="Capsid protein VP1">
    <location>
        <begin position="571"/>
        <end position="851"/>
    </location>
</feature>
<feature type="chain" id="PRO_0000426288" description="P2">
    <location>
        <begin position="852"/>
        <end position="1429"/>
    </location>
</feature>
<feature type="chain" id="PRO_0000426289" description="Protease 2A">
    <location>
        <begin position="852"/>
        <end position="1001"/>
    </location>
</feature>
<feature type="chain" id="PRO_0000039598" description="Protein 2B">
    <location>
        <begin position="1002"/>
        <end position="1100"/>
    </location>
</feature>
<feature type="chain" id="PRO_0000039599" description="Protein 2C">
    <location>
        <begin position="1101"/>
        <end position="1429"/>
    </location>
</feature>
<feature type="chain" id="PRO_0000426290" description="P3">
    <location>
        <begin position="1430"/>
        <end position="2185"/>
    </location>
</feature>
<feature type="chain" id="PRO_0000426291" description="Protein 3AB">
    <location>
        <begin position="1430"/>
        <end position="1540"/>
    </location>
</feature>
<feature type="chain" id="PRO_0000039600" description="Protein 3A">
    <location>
        <begin position="1430"/>
        <end position="1518"/>
    </location>
</feature>
<feature type="chain" id="PRO_0000426292" description="Viral protein genome-linked">
    <location>
        <begin position="1519"/>
        <end position="1540"/>
    </location>
</feature>
<feature type="chain" id="PRO_0000426293" description="Protein 3CD">
    <location>
        <begin position="1541"/>
        <end position="2185"/>
    </location>
</feature>
<feature type="chain" id="PRO_0000426294" description="Protease 3C">
    <location>
        <begin position="1541"/>
        <end position="1723"/>
    </location>
</feature>
<feature type="chain" id="PRO_0000426295" description="RNA-directed RNA polymerase">
    <location>
        <begin position="1724"/>
        <end position="2185"/>
    </location>
</feature>
<feature type="topological domain" description="Cytoplasmic" evidence="9">
    <location>
        <begin position="2"/>
        <end position="1495"/>
    </location>
</feature>
<feature type="intramembrane region" evidence="9">
    <location>
        <begin position="1496"/>
        <end position="1511"/>
    </location>
</feature>
<feature type="topological domain" description="Cytoplasmic" evidence="9">
    <location>
        <begin position="1512"/>
        <end position="2185"/>
    </location>
</feature>
<feature type="domain" description="SF3 helicase" evidence="11">
    <location>
        <begin position="1205"/>
        <end position="1361"/>
    </location>
</feature>
<feature type="domain" description="Peptidase C3" evidence="12">
    <location>
        <begin position="1541"/>
        <end position="1719"/>
    </location>
</feature>
<feature type="domain" description="RdRp catalytic" evidence="10">
    <location>
        <begin position="1950"/>
        <end position="2066"/>
    </location>
</feature>
<feature type="zinc finger region" description="C4-type; degenerate" evidence="1">
    <location>
        <begin position="1369"/>
        <end position="1386"/>
    </location>
</feature>
<feature type="region of interest" description="Amphipathic alpha-helix" evidence="9">
    <location>
        <begin position="568"/>
        <end position="584"/>
    </location>
</feature>
<feature type="region of interest" description="Oligomerization" evidence="2">
    <location>
        <begin position="1101"/>
        <end position="1239"/>
    </location>
</feature>
<feature type="region of interest" description="Membrane-binding" evidence="2">
    <location>
        <begin position="1101"/>
        <end position="1173"/>
    </location>
</feature>
<feature type="region of interest" description="RNA-binding" evidence="2">
    <location>
        <begin position="1122"/>
        <end position="1126"/>
    </location>
</feature>
<feature type="region of interest" description="RNA-binding" evidence="2">
    <location>
        <begin position="1413"/>
        <end position="1420"/>
    </location>
</feature>
<feature type="region of interest" description="Oligomerization" evidence="2">
    <location>
        <begin position="1424"/>
        <end position="1429"/>
    </location>
</feature>
<feature type="active site" description="For protease 2A activity" evidence="2">
    <location>
        <position position="872"/>
    </location>
</feature>
<feature type="active site" description="For protease 2A activity" evidence="2">
    <location>
        <position position="890"/>
    </location>
</feature>
<feature type="active site" description="For protease 2A activity" evidence="2">
    <location>
        <position position="961"/>
    </location>
</feature>
<feature type="active site" description="For protease 3C activity" evidence="12">
    <location>
        <position position="1580"/>
    </location>
</feature>
<feature type="active site" description="For protease 3C activity" evidence="12">
    <location>
        <position position="1611"/>
    </location>
</feature>
<feature type="active site" description="For protease 3C activity" evidence="12">
    <location>
        <position position="1687"/>
    </location>
</feature>
<feature type="binding site" evidence="8">
    <location>
        <position position="907"/>
    </location>
    <ligand>
        <name>Zn(2+)</name>
        <dbReference type="ChEBI" id="CHEBI:29105"/>
        <label>1</label>
        <note>structural</note>
    </ligand>
</feature>
<feature type="binding site" evidence="8">
    <location>
        <position position="909"/>
    </location>
    <ligand>
        <name>Zn(2+)</name>
        <dbReference type="ChEBI" id="CHEBI:29105"/>
        <label>1</label>
        <note>structural</note>
    </ligand>
</feature>
<feature type="binding site" evidence="8">
    <location>
        <position position="967"/>
    </location>
    <ligand>
        <name>Zn(2+)</name>
        <dbReference type="ChEBI" id="CHEBI:29105"/>
        <label>1</label>
        <note>structural</note>
    </ligand>
</feature>
<feature type="binding site" evidence="8">
    <location>
        <position position="969"/>
    </location>
    <ligand>
        <name>Zn(2+)</name>
        <dbReference type="ChEBI" id="CHEBI:29105"/>
        <label>1</label>
        <note>structural</note>
    </ligand>
</feature>
<feature type="binding site" evidence="1">
    <location>
        <position position="1369"/>
    </location>
    <ligand>
        <name>Zn(2+)</name>
        <dbReference type="ChEBI" id="CHEBI:29105"/>
        <label>2</label>
    </ligand>
</feature>
<feature type="binding site" evidence="1">
    <location>
        <position position="1381"/>
    </location>
    <ligand>
        <name>Zn(2+)</name>
        <dbReference type="ChEBI" id="CHEBI:29105"/>
        <label>2</label>
    </ligand>
</feature>
<feature type="binding site" evidence="1">
    <location>
        <position position="1386"/>
    </location>
    <ligand>
        <name>Zn(2+)</name>
        <dbReference type="ChEBI" id="CHEBI:29105"/>
        <label>2</label>
    </ligand>
</feature>
<feature type="binding site" evidence="2">
    <location>
        <position position="1956"/>
    </location>
    <ligand>
        <name>Mg(2+)</name>
        <dbReference type="ChEBI" id="CHEBI:18420"/>
        <label>1</label>
        <note>catalytic; for RdRp activity</note>
    </ligand>
</feature>
<feature type="binding site" evidence="2">
    <location>
        <position position="1956"/>
    </location>
    <ligand>
        <name>Mg(2+)</name>
        <dbReference type="ChEBI" id="CHEBI:18420"/>
        <label>2</label>
        <note>catalytic; for RdRp activity</note>
    </ligand>
</feature>
<feature type="binding site" evidence="2">
    <location>
        <position position="2052"/>
    </location>
    <ligand>
        <name>Mg(2+)</name>
        <dbReference type="ChEBI" id="CHEBI:18420"/>
        <label>1</label>
        <note>catalytic; for RdRp activity</note>
    </ligand>
</feature>
<feature type="binding site" evidence="2">
    <location>
        <position position="2052"/>
    </location>
    <ligand>
        <name>Mg(2+)</name>
        <dbReference type="ChEBI" id="CHEBI:18420"/>
        <label>2</label>
        <note>catalytic; for RdRp activity</note>
    </ligand>
</feature>
<feature type="site" description="Cleavage; by autolysis" evidence="2">
    <location>
        <begin position="69"/>
        <end position="70"/>
    </location>
</feature>
<feature type="site" description="Cleavage; by protease 3C" evidence="3">
    <location>
        <begin position="332"/>
        <end position="333"/>
    </location>
</feature>
<feature type="site" description="Cleavage; by autolysis" evidence="3">
    <location>
        <begin position="851"/>
        <end position="852"/>
    </location>
</feature>
<feature type="site" description="Cleavage; by protease 3C" evidence="3">
    <location>
        <begin position="1001"/>
        <end position="1002"/>
    </location>
</feature>
<feature type="site" description="Cleavage; by protease 3C" evidence="3">
    <location>
        <begin position="1100"/>
        <end position="1101"/>
    </location>
</feature>
<feature type="site" description="Involved in the interaction with host RTN3" evidence="7">
    <location>
        <position position="1125"/>
    </location>
</feature>
<feature type="site" description="Cleavage; by protease 3C" evidence="3">
    <location>
        <begin position="1429"/>
        <end position="1430"/>
    </location>
</feature>
<feature type="site" description="Cleavage; by protease 3C" evidence="3">
    <location>
        <begin position="1518"/>
        <end position="1519"/>
    </location>
</feature>
<feature type="site" description="Cleavage; by protease 3C" evidence="3">
    <location>
        <begin position="1540"/>
        <end position="1541"/>
    </location>
</feature>
<feature type="site" description="Cleavage; by protease 3C" evidence="3">
    <location>
        <begin position="1723"/>
        <end position="1724"/>
    </location>
</feature>
<feature type="modified residue" description="O-(5'-phospho-RNA)-tyrosine" evidence="2">
    <location>
        <position position="1521"/>
    </location>
</feature>
<feature type="lipid moiety-binding region" description="N-myristoyl glycine; by host" evidence="13">
    <location>
        <position position="2"/>
    </location>
</feature>
<feature type="strand" evidence="15">
    <location>
        <begin position="4"/>
        <end position="7"/>
    </location>
</feature>
<feature type="strand" evidence="15">
    <location>
        <begin position="26"/>
        <end position="29"/>
    </location>
</feature>
<feature type="helix" evidence="15">
    <location>
        <begin position="36"/>
        <end position="38"/>
    </location>
</feature>
<feature type="helix" evidence="15">
    <location>
        <begin position="50"/>
        <end position="52"/>
    </location>
</feature>
<feature type="strand" evidence="15">
    <location>
        <begin position="57"/>
        <end position="59"/>
    </location>
</feature>
<feature type="strand" evidence="15">
    <location>
        <begin position="83"/>
        <end position="87"/>
    </location>
</feature>
<feature type="strand" evidence="15">
    <location>
        <begin position="90"/>
        <end position="96"/>
    </location>
</feature>
<feature type="turn" evidence="15">
    <location>
        <begin position="113"/>
        <end position="115"/>
    </location>
</feature>
<feature type="helix" evidence="15">
    <location>
        <begin position="126"/>
        <end position="128"/>
    </location>
</feature>
<feature type="strand" evidence="15">
    <location>
        <begin position="133"/>
        <end position="140"/>
    </location>
</feature>
<feature type="strand" evidence="15">
    <location>
        <begin position="147"/>
        <end position="151"/>
    </location>
</feature>
<feature type="turn" evidence="15">
    <location>
        <begin position="152"/>
        <end position="154"/>
    </location>
</feature>
<feature type="helix" evidence="15">
    <location>
        <begin position="159"/>
        <end position="167"/>
    </location>
</feature>
<feature type="strand" evidence="15">
    <location>
        <begin position="168"/>
        <end position="180"/>
    </location>
</feature>
<feature type="strand" evidence="15">
    <location>
        <begin position="188"/>
        <end position="197"/>
    </location>
</feature>
<feature type="strand" evidence="15">
    <location>
        <begin position="203"/>
        <end position="205"/>
    </location>
</feature>
<feature type="helix" evidence="15">
    <location>
        <begin position="212"/>
        <end position="215"/>
    </location>
</feature>
<feature type="strand" evidence="15">
    <location>
        <begin position="218"/>
        <end position="220"/>
    </location>
</feature>
<feature type="strand" evidence="15">
    <location>
        <begin position="225"/>
        <end position="227"/>
    </location>
</feature>
<feature type="helix" evidence="15">
    <location>
        <begin position="241"/>
        <end position="243"/>
    </location>
</feature>
<feature type="turn" evidence="15">
    <location>
        <begin position="244"/>
        <end position="247"/>
    </location>
</feature>
<feature type="helix" evidence="15">
    <location>
        <begin position="250"/>
        <end position="255"/>
    </location>
</feature>
<feature type="strand" evidence="15">
    <location>
        <begin position="256"/>
        <end position="262"/>
    </location>
</feature>
<feature type="turn" evidence="15">
    <location>
        <begin position="263"/>
        <end position="265"/>
    </location>
</feature>
<feature type="strand" evidence="15">
    <location>
        <begin position="267"/>
        <end position="273"/>
    </location>
</feature>
<feature type="strand" evidence="15">
    <location>
        <begin position="278"/>
        <end position="280"/>
    </location>
</feature>
<feature type="turn" evidence="15">
    <location>
        <begin position="284"/>
        <end position="286"/>
    </location>
</feature>
<feature type="strand" evidence="15">
    <location>
        <begin position="290"/>
        <end position="301"/>
    </location>
</feature>
<feature type="strand" evidence="15">
    <location>
        <begin position="310"/>
        <end position="326"/>
    </location>
</feature>
<feature type="turn" evidence="15">
    <location>
        <begin position="340"/>
        <end position="343"/>
    </location>
</feature>
<feature type="strand" evidence="15">
    <location>
        <begin position="355"/>
        <end position="357"/>
    </location>
</feature>
<feature type="strand" evidence="15">
    <location>
        <begin position="369"/>
        <end position="374"/>
    </location>
</feature>
<feature type="helix" evidence="15">
    <location>
        <begin position="376"/>
        <end position="379"/>
    </location>
</feature>
<feature type="helix" evidence="15">
    <location>
        <begin position="391"/>
        <end position="395"/>
    </location>
</feature>
<feature type="helix" evidence="15">
    <location>
        <begin position="397"/>
        <end position="400"/>
    </location>
</feature>
<feature type="strand" evidence="15">
    <location>
        <begin position="402"/>
        <end position="405"/>
    </location>
</feature>
<feature type="strand" evidence="15">
    <location>
        <begin position="408"/>
        <end position="410"/>
    </location>
</feature>
<feature type="strand" evidence="15">
    <location>
        <begin position="413"/>
        <end position="419"/>
    </location>
</feature>
<feature type="turn" evidence="15">
    <location>
        <begin position="421"/>
        <end position="423"/>
    </location>
</feature>
<feature type="turn" evidence="15">
    <location>
        <begin position="425"/>
        <end position="429"/>
    </location>
</feature>
<feature type="helix" evidence="15">
    <location>
        <begin position="431"/>
        <end position="436"/>
    </location>
</feature>
<feature type="strand" evidence="15">
    <location>
        <begin position="439"/>
        <end position="443"/>
    </location>
</feature>
<feature type="strand" evidence="15">
    <location>
        <begin position="446"/>
        <end position="452"/>
    </location>
</feature>
<feature type="strand" evidence="15">
    <location>
        <begin position="461"/>
        <end position="467"/>
    </location>
</feature>
<feature type="strand" evidence="15">
    <location>
        <begin position="469"/>
        <end position="471"/>
    </location>
</feature>
<feature type="helix" evidence="15">
    <location>
        <begin position="477"/>
        <end position="480"/>
    </location>
</feature>
<feature type="strand" evidence="15">
    <location>
        <begin position="483"/>
        <end position="489"/>
    </location>
</feature>
<feature type="strand" evidence="15">
    <location>
        <begin position="491"/>
        <end position="493"/>
    </location>
</feature>
<feature type="strand" evidence="15">
    <location>
        <begin position="495"/>
        <end position="500"/>
    </location>
</feature>
<feature type="strand" evidence="15">
    <location>
        <begin position="505"/>
        <end position="512"/>
    </location>
</feature>
<feature type="strand" evidence="15">
    <location>
        <begin position="521"/>
        <end position="528"/>
    </location>
</feature>
<feature type="strand" evidence="15">
    <location>
        <begin position="538"/>
        <end position="548"/>
    </location>
</feature>
<feature type="strand" evidence="15">
    <location>
        <begin position="553"/>
        <end position="557"/>
    </location>
</feature>
<feature type="strand" evidence="15">
    <location>
        <begin position="599"/>
        <end position="602"/>
    </location>
</feature>
<feature type="helix" evidence="15">
    <location>
        <begin position="604"/>
        <end position="606"/>
    </location>
</feature>
<feature type="helix" evidence="15">
    <location>
        <begin position="614"/>
        <end position="617"/>
    </location>
</feature>
<feature type="helix" evidence="15">
    <location>
        <begin position="634"/>
        <end position="638"/>
    </location>
</feature>
<feature type="strand" evidence="15">
    <location>
        <begin position="642"/>
        <end position="654"/>
    </location>
</feature>
<feature type="strand" evidence="15">
    <location>
        <begin position="656"/>
        <end position="661"/>
    </location>
</feature>
<feature type="helix" evidence="15">
    <location>
        <begin position="668"/>
        <end position="674"/>
    </location>
</feature>
<feature type="strand" evidence="15">
    <location>
        <begin position="677"/>
        <end position="694"/>
    </location>
</feature>
<feature type="strand" evidence="15">
    <location>
        <begin position="708"/>
        <end position="714"/>
    </location>
</feature>
<feature type="helix" evidence="15">
    <location>
        <begin position="727"/>
        <end position="730"/>
    </location>
</feature>
<feature type="strand" evidence="15">
    <location>
        <begin position="732"/>
        <end position="734"/>
    </location>
</feature>
<feature type="strand" evidence="15">
    <location>
        <begin position="736"/>
        <end position="740"/>
    </location>
</feature>
<feature type="strand" evidence="15">
    <location>
        <begin position="747"/>
        <end position="750"/>
    </location>
</feature>
<feature type="strand" evidence="15">
    <location>
        <begin position="755"/>
        <end position="761"/>
    </location>
</feature>
<feature type="strand" evidence="15">
    <location>
        <begin position="765"/>
        <end position="768"/>
    </location>
</feature>
<feature type="turn" evidence="15">
    <location>
        <begin position="769"/>
        <end position="771"/>
    </location>
</feature>
<feature type="strand" evidence="15">
    <location>
        <begin position="772"/>
        <end position="776"/>
    </location>
</feature>
<feature type="helix" evidence="15">
    <location>
        <begin position="777"/>
        <end position="779"/>
    </location>
</feature>
<feature type="strand" evidence="15">
    <location>
        <begin position="785"/>
        <end position="791"/>
    </location>
</feature>
<feature type="strand" evidence="15">
    <location>
        <begin position="795"/>
        <end position="797"/>
    </location>
</feature>
<feature type="strand" evidence="15">
    <location>
        <begin position="799"/>
        <end position="817"/>
    </location>
</feature>
<feature type="strand" evidence="15">
    <location>
        <begin position="828"/>
        <end position="830"/>
    </location>
</feature>
<comment type="function">
    <molecule>Capsid protein VP1</molecule>
    <text evidence="2 5">Forms an icosahedral capsid of pseudo T=3 symmetry with capsid proteins VP2 and VP3 (By similarity). The capsid is 300 Angstroms in diameter, composed of 60 copies of each capsid protein and enclosing the viral positive strand RNA genome (By similarity). Capsid protein VP1 mainly forms the vertices of the capsid (By similarity). Capsid protein VP1 interacts with host cell receptors CD55 and CXADR to provide virion attachment to target host cells (By similarity). This attachment induces virion internalization (By similarity). Tyrosine kinases are probably involved in the entry process (By similarity). After binding to its receptor, the capsid undergoes conformational changes (By similarity). Capsid protein VP1 N-terminus (that contains an amphipathic alpha-helix) and capsid protein VP4 are externalized (By similarity). Together, they shape a pore in the host membrane through which viral genome is translocated to host cell cytoplasm (By similarity).</text>
</comment>
<comment type="function">
    <molecule>Capsid protein VP2</molecule>
    <text evidence="2">Forms an icosahedral capsid of pseudo T=3 symmetry with capsid proteins VP2 and VP3 (By similarity). The capsid is 300 Angstroms in diameter, composed of 60 copies of each capsid protein and enclosing the viral positive strand RNA genome (By similarity).</text>
</comment>
<comment type="function">
    <molecule>Capsid protein VP3</molecule>
    <text evidence="2">Forms an icosahedral capsid of pseudo T=3 symmetry with capsid proteins VP2 and VP3 (By similarity). The capsid is 300 Angstroms in diameter, composed of 60 copies of each capsid protein and enclosing the viral positive strand RNA genome (By similarity).</text>
</comment>
<comment type="function">
    <molecule>Capsid protein VP4</molecule>
    <text evidence="2">Lies on the inner surface of the capsid shell (By similarity). After binding to the host receptor, the capsid undergoes conformational changes (By similarity). Capsid protein VP4 is released, Capsid protein VP1 N-terminus is externalized, and together, they shape a pore in the host membrane through which the viral genome is translocated into the host cell cytoplasm (By similarity).</text>
</comment>
<comment type="function">
    <molecule>Capsid protein VP0</molecule>
    <text evidence="2">Component of immature procapsids, which is cleaved into capsid proteins VP4 and VP2 after maturation (By similarity). Allows the capsid to remain inactive before the maturation step (By similarity).</text>
</comment>
<comment type="function">
    <molecule>Protease 2A</molecule>
    <text evidence="2 5">Cysteine protease that cleaves viral polyprotein and specific host proteins (By similarity). It is responsible for the autocatalytic cleavage between the P1 and P2 regions, which is the first cleavage occurring in the polyprotein (By similarity). Also cleaves the host translation initiation factor EIF4G1, in order to shut down the capped cellular mRNA translation (By similarity). Inhibits the host nucleus-cytoplasm protein and RNA trafficking by cleaving host members of the nuclear pores (By similarity). Counteracts stress granule formation probably by antagonizing its assembly or promoting its dissassembly (By similarity). Cleaves and inhibits host IFIH1/MDA5, thereby inhibiting the type-I IFN production and the establishment of the antiviral state (By similarity). Cleaves and inhibits host MAVS, thereby inhibiting the type-I IFN production and the establishment of the antiviral state (By similarity).</text>
</comment>
<comment type="function">
    <molecule>Protein 2B</molecule>
    <text evidence="2">Plays an essential role in the virus replication cycle by acting as a viroporin. Creates a pore in the host endoplasmic reticulum and as a consequence releases Ca2+ in the cytoplasm of infected cell. In turn, high levels of cytoplasmic calcium may trigger membrane trafficking and transport of viral ER-associated proteins to viroplasms, sites of viral genome replication.</text>
</comment>
<comment type="function">
    <molecule>Protein 2C</molecule>
    <text evidence="2">Induces and associates with structural rearrangements of intracellular membranes. Displays RNA-binding, nucleotide binding and NTPase activities. May play a role in virion morphogenesis and viral RNA encapsidation by interacting with the capsid protein VP3.</text>
</comment>
<comment type="function">
    <molecule>Protein 3AB</molecule>
    <text evidence="2">Localizes the viral replication complex to the surface of membranous vesicles. Together with protein 3CD binds the Cis-Active RNA Element (CRE) which is involved in RNA synthesis initiation. Acts as a cofactor to stimulate the activity of 3D polymerase, maybe through a nucleid acid chaperone activity.</text>
</comment>
<comment type="function">
    <molecule>Protein 3A</molecule>
    <text evidence="2 5">Localizes the viral replication complex to the surface of membranous vesicles (By similarity). It inhibits host cell endoplasmic reticulum-to-Golgi apparatus transport and causes the disassembly of the Golgi complex, possibly through GBF1 interaction (By similarity). This would result in depletion of MHC, trail receptors and IFN receptors at the host cell surface (By similarity). Plays an essential role in viral RNA replication by recruiting ACBD3 and PI4KB at the viral replication sites, thereby allowing the formation of the rearranged membranous structures where viral replication takes place (By similarity).</text>
</comment>
<comment type="function">
    <molecule>Viral protein genome-linked</molecule>
    <text evidence="2">Acts as a primer for viral RNA replication and remains covalently bound to viral genomic RNA. VPg is uridylylated prior to priming replication into VPg-pUpU. The oriI viral genomic sequence may act as a template for this. The VPg-pUpU is then used as primer on the genomic RNA poly(A) by the RNA-dependent RNA polymerase to replicate the viral genome. During genome replication, the VPg-RNA linkage is removed by the host TDP2, thereby accelerating replication. During the late stage of the replication cycle, host TDP2 is excluded from sites of viral RNA synthesis and encapsidation, allowing for the generation of progeny virions.</text>
</comment>
<comment type="function">
    <molecule>Protein 3CD</molecule>
    <text evidence="2">Involved in the viral replication complex and viral polypeptide maturation. It exhibits protease activity with a specificity and catalytic efficiency that is different from protease 3C. Protein 3CD lacks polymerase activity. Protein 3CD binds to the 5'UTR of the viral genome.</text>
</comment>
<comment type="function">
    <molecule>Protease 3C</molecule>
    <text evidence="2 4 5">Major viral protease that mediates proteolytic processing of the polyprotein (By similarity). Cleaves host EIF5B, contributing to host translation shutoff (By similarity). Also cleaves host PABPC1, contributing to host translation shutoff (By similarity). Cleaves and inhibits host RIGI, thereby inhibiting the type-I IFN production and the establishment of the antiviral state (By similarity). Cleaves and inhibits host MAVS, thereby inhibiting the type-I IFN production and the establishment of the antiviral state (By similarity). Cleaves and inhibits host TICAM1/TRIF, thereby inhibiting the type-I IFN production (By similarity). Cleaves host NLRP1, triggers host N-glycine-mediated degradation of the autoinhibitory NLRP1 N-terminal fragment (By similarity).</text>
</comment>
<comment type="function">
    <molecule>RNA-directed RNA polymerase</molecule>
    <text evidence="2">Replicates the viral genomic RNA on the surface of intracellular membranes. May form linear arrays of subunits that propagate along a strong head-to-tail interaction called interface-I. Covalently attaches UMP to a tyrosine of VPg, which is used to prime RNA synthesis. The positive stranded RNA genome is first replicated at virus induced membranous vesicles, creating a dsRNA genomic replication form. This dsRNA is then used as template to synthesize positive stranded RNA genomes. ss(+)RNA genomes are either translated, replicated or encapsidated.</text>
</comment>
<comment type="catalytic activity">
    <molecule>Protein 2C</molecule>
    <reaction evidence="2">
        <text>a ribonucleoside 5'-triphosphate + H2O = a ribonucleoside 5'-diphosphate + phosphate + H(+)</text>
        <dbReference type="Rhea" id="RHEA:23680"/>
        <dbReference type="ChEBI" id="CHEBI:15377"/>
        <dbReference type="ChEBI" id="CHEBI:15378"/>
        <dbReference type="ChEBI" id="CHEBI:43474"/>
        <dbReference type="ChEBI" id="CHEBI:57930"/>
        <dbReference type="ChEBI" id="CHEBI:61557"/>
        <dbReference type="EC" id="3.6.1.15"/>
    </reaction>
</comment>
<comment type="catalytic activity">
    <molecule>Protease 2A</molecule>
    <reaction evidence="2">
        <text>Selective cleavage of Tyr-|-Gly bond in the picornavirus polyprotein.</text>
        <dbReference type="EC" id="3.4.22.29"/>
    </reaction>
</comment>
<comment type="catalytic activity">
    <molecule>RNA-directed RNA polymerase</molecule>
    <reaction evidence="10">
        <text>RNA(n) + a ribonucleoside 5'-triphosphate = RNA(n+1) + diphosphate</text>
        <dbReference type="Rhea" id="RHEA:21248"/>
        <dbReference type="Rhea" id="RHEA-COMP:14527"/>
        <dbReference type="Rhea" id="RHEA-COMP:17342"/>
        <dbReference type="ChEBI" id="CHEBI:33019"/>
        <dbReference type="ChEBI" id="CHEBI:61557"/>
        <dbReference type="ChEBI" id="CHEBI:140395"/>
        <dbReference type="EC" id="2.7.7.48"/>
    </reaction>
</comment>
<comment type="catalytic activity">
    <molecule>Protease 3C</molecule>
    <reaction evidence="12">
        <text>Selective cleavage of Gln-|-Gly bond in the poliovirus polyprotein. In other picornavirus reactions Glu may be substituted for Gln, and Ser or Thr for Gly.</text>
        <dbReference type="EC" id="3.4.22.28"/>
    </reaction>
</comment>
<comment type="cofactor">
    <molecule>RNA-directed RNA polymerase</molecule>
    <cofactor evidence="2">
        <name>Mg(2+)</name>
        <dbReference type="ChEBI" id="CHEBI:18420"/>
    </cofactor>
    <text evidence="2 5">Binds 2 magnesium ions that constitute a dinuclear catalytic metal center (By similarity). The magnesium ions are not prebound but only present for catalysis (By similarity). Requires the presence of 3CDpro or 3CPro (By similarity).</text>
</comment>
<comment type="activity regulation">
    <molecule>RNA-directed RNA polymerase</molecule>
    <text evidence="2">Replication or transcription is subject to high level of random mutations by the nucleotide analog ribavirin.</text>
</comment>
<comment type="subunit">
    <molecule>Capsid protein VP0</molecule>
    <text evidence="2">Interacts with capsid protein VP1 and capsid protein VP3 to form heterotrimeric protomers.</text>
</comment>
<comment type="subunit">
    <molecule>Capsid protein VP1</molecule>
    <text evidence="2 5">Interacts with capsid protein VP0, and capsid protein VP3 to form heterotrimeric protomers (By similarity). Five protomers subsequently associate to form pentamers which serve as building blocks for the capsid (By similarity). Interacts with capsid protein VP2, capsid protein VP3 and capsid protein VP4 following cleavage of capsid protein VP0 (By similarity). Interacts with host CD55 (By similarity). Interacts with host CXADR (By similarity).</text>
</comment>
<comment type="subunit">
    <molecule>Capsid protein VP2</molecule>
    <text evidence="2">Interacts with capsid protein VP1 and capsid protein VP3 in the mature capsid.</text>
</comment>
<comment type="subunit">
    <molecule>Capsid protein VP3</molecule>
    <text evidence="2">Interacts with capsid protein VP0 and capsid protein VP1 to form heterotrimeric protomers (By similarity). Five protomers subsequently associate to form pentamers which serve as building blocks for the capsid (By similarity). Interacts with capsid protein VP4 in the mature capsid (By similarity). Interacts with protein 2C; this interaction may be important for virion morphogenesis (By similarity).</text>
</comment>
<comment type="subunit">
    <molecule>Capsid protein VP4</molecule>
    <text evidence="2">Interacts with capsid protein VP1 and capsid protein VP3.</text>
</comment>
<comment type="subunit">
    <molecule>Protease 2A</molecule>
    <text evidence="6">Homodimer.</text>
</comment>
<comment type="subunit">
    <molecule>Protein 2C</molecule>
    <text evidence="2">Homohexamer; forms a hexameric ring structure with 6-fold symmetry characteristic of AAA+ ATPases (By similarity). Interacts (via N-terminus) with host RTN3 (via reticulon domain); this interaction is important for viral replication (By similarity). Interacts with capsid protein VP3; this interaction may be important for virion morphogenesis (By similarity).</text>
</comment>
<comment type="subunit">
    <molecule>Protein 3AB</molecule>
    <text evidence="2">Interacts with protein 3CD.</text>
</comment>
<comment type="subunit">
    <molecule>Protein 3A</molecule>
    <text evidence="2 5">Homodimer (By similarity). Interacts with host GBF1 (By similarity). Interacts (via GOLD domain) with host ACBD3 (via GOLD domain); this interaction allows the formation of a viral protein 3A/ACBD3 heterotetramer with a 2:2 stoichiometry, which will stimulate the recruitment of host PI4KB in order to synthesize PI4P at the viral RNA replication sites (By similarity).</text>
</comment>
<comment type="subunit">
    <molecule>Viral protein genome-linked</molecule>
    <text evidence="2">Interacts with RNA-directed RNA polymerase.</text>
</comment>
<comment type="subunit">
    <molecule>Protease 3C</molecule>
    <text evidence="5">Interacts with host TICAM1 (via C-terminus).</text>
</comment>
<comment type="subunit">
    <molecule>Protein 3CD</molecule>
    <text evidence="2">Interacts with protein 3AB and with RNA-directed RNA polymerase.</text>
</comment>
<comment type="subunit">
    <molecule>RNA-directed RNA polymerase</molecule>
    <text evidence="2">Interacts with Viral protein genome-linked and with protein 3CD.</text>
</comment>
<comment type="interaction">
    <interactant intactId="EBI-21242149">
        <id>PRO_0000039600</id>
    </interactant>
    <interactant intactId="EBI-1791792">
        <id>Q9H3P7</id>
        <label>ACBD3</label>
    </interactant>
    <organismsDiffer>true</organismsDiffer>
    <experiments>2</experiments>
</comment>
<comment type="subcellular location">
    <molecule>Capsid protein VP0</molecule>
    <subcellularLocation>
        <location>Virion</location>
    </subcellularLocation>
    <subcellularLocation>
        <location evidence="14">Host cytoplasm</location>
    </subcellularLocation>
</comment>
<comment type="subcellular location">
    <molecule>Capsid protein VP4</molecule>
    <subcellularLocation>
        <location>Virion</location>
    </subcellularLocation>
</comment>
<comment type="subcellular location">
    <molecule>Capsid protein VP2</molecule>
    <subcellularLocation>
        <location evidence="2">Virion</location>
    </subcellularLocation>
    <subcellularLocation>
        <location evidence="14">Host cytoplasm</location>
    </subcellularLocation>
</comment>
<comment type="subcellular location">
    <molecule>Capsid protein VP3</molecule>
    <subcellularLocation>
        <location evidence="2">Virion</location>
    </subcellularLocation>
    <subcellularLocation>
        <location evidence="14">Host cytoplasm</location>
    </subcellularLocation>
</comment>
<comment type="subcellular location">
    <molecule>Capsid protein VP1</molecule>
    <subcellularLocation>
        <location evidence="2">Virion</location>
    </subcellularLocation>
    <subcellularLocation>
        <location evidence="14">Host cytoplasm</location>
    </subcellularLocation>
</comment>
<comment type="subcellular location">
    <molecule>Protein 2B</molecule>
    <subcellularLocation>
        <location evidence="14">Host cytoplasmic vesicle membrane</location>
        <topology evidence="14">Peripheral membrane protein</topology>
        <orientation evidence="14">Cytoplasmic side</orientation>
    </subcellularLocation>
    <text>Probably localizes to the surface of intracellular membrane vesicles that are induced after virus infection as the site for viral RNA replication. These vesicles are derived from the endoplasmic reticulum.</text>
</comment>
<comment type="subcellular location">
    <molecule>Protein 2C</molecule>
    <subcellularLocation>
        <location evidence="14">Host cytoplasmic vesicle membrane</location>
        <topology evidence="14">Peripheral membrane protein</topology>
        <orientation evidence="14">Cytoplasmic side</orientation>
    </subcellularLocation>
    <text>Probably localizes to the surface of intracellular membrane vesicles that are induced after virus infection as the site for viral RNA replication. These vesicles are derived from the endoplasmic reticulum.</text>
</comment>
<comment type="subcellular location">
    <molecule>Protein 3A</molecule>
    <subcellularLocation>
        <location evidence="14">Host cytoplasmic vesicle membrane</location>
        <topology evidence="14">Peripheral membrane protein</topology>
        <orientation evidence="14">Cytoplasmic side</orientation>
    </subcellularLocation>
    <text>Probably localizes to the surface of intracellular membrane vesicles that are induced after virus infection as the site for viral RNA replication. These vesicles are derived from the endoplasmic reticulum.</text>
</comment>
<comment type="subcellular location">
    <molecule>Protein 3AB</molecule>
    <subcellularLocation>
        <location evidence="14">Host cytoplasmic vesicle membrane</location>
        <topology evidence="14">Peripheral membrane protein</topology>
        <orientation evidence="14">Cytoplasmic side</orientation>
    </subcellularLocation>
    <text>Probably localizes to the surface of intracellular membrane vesicles that are induced after virus infection as the site for viral RNA replication. These vesicles are derived from the endoplasmic reticulum.</text>
</comment>
<comment type="subcellular location">
    <molecule>Viral protein genome-linked</molecule>
    <subcellularLocation>
        <location evidence="2">Virion</location>
    </subcellularLocation>
    <subcellularLocation>
        <location evidence="7">Host cytoplasm</location>
    </subcellularLocation>
</comment>
<comment type="subcellular location">
    <molecule>Protease 3C</molecule>
    <subcellularLocation>
        <location>Host cytoplasm</location>
    </subcellularLocation>
</comment>
<comment type="subcellular location">
    <molecule>Protein 3CD</molecule>
    <subcellularLocation>
        <location evidence="2">Host nucleus</location>
    </subcellularLocation>
    <subcellularLocation>
        <location evidence="2">Host cytoplasm</location>
    </subcellularLocation>
    <subcellularLocation>
        <location evidence="14">Host cytoplasmic vesicle membrane</location>
        <topology evidence="14">Peripheral membrane protein</topology>
        <orientation evidence="14">Cytoplasmic side</orientation>
    </subcellularLocation>
    <text>Probably localizes to the surface of intracellular membrane vesicles that are induced after virus infection as the site for viral RNA replication. These vesicles are derived from the endoplasmic reticulum.</text>
</comment>
<comment type="subcellular location">
    <molecule>RNA-directed RNA polymerase</molecule>
    <subcellularLocation>
        <location evidence="14">Host cytoplasmic vesicle membrane</location>
        <topology evidence="14">Peripheral membrane protein</topology>
        <orientation evidence="14">Cytoplasmic side</orientation>
    </subcellularLocation>
    <text>Probably localizes to the surface of intracellular membrane vesicles that are induced after virus infection as the site for viral RNA replication. These vesicles are derived from the endoplasmic reticulum.</text>
</comment>
<comment type="domain">
    <molecule>Protein 2C</molecule>
    <text evidence="1 2">The N-terminus has membrane-binding (By similarity). The N-terminus also displays RNA-binding properties (By similarity). The N-terminus is involved in oligomerization (By similarity). The central part contains an ATPase domain and a degenerate C4-type zinc-finger with only 3 cysteines (By similarity). The extreme C-terminus contains a region involved in oligomerization (By similarity).</text>
</comment>
<comment type="PTM">
    <molecule>Genome polyprotein</molecule>
    <text evidence="2">Specific enzymatic cleavages in vivo by the viral proteases yield processing intermediates and the mature proteins.</text>
</comment>
<comment type="PTM">
    <molecule>Capsid protein VP0</molecule>
    <text evidence="2">Myristoylation is required for the formation of pentamers during virus assembly. Further assembly of 12 pentamers and a molecule of genomic RNA generates the provirion.</text>
</comment>
<comment type="PTM">
    <molecule>Capsid protein VP0</molecule>
    <text evidence="2">During virion maturation, immature virions are rendered infectious following cleavage of VP0 into VP4 and VP2. This maturation seems to be an autocatalytic event triggered by the presence of RNA in the capsid and it is followed by a conformational change infectious virion.</text>
</comment>
<comment type="PTM">
    <molecule>Capsid protein VP4</molecule>
    <text evidence="2">Myristoylation is required during RNA encapsidation and formation of the mature virus particle.</text>
</comment>
<comment type="PTM">
    <molecule>Viral protein genome-linked</molecule>
    <text evidence="2">VPg is uridylylated by the polymerase into VPg-pUpU. This acts as a nucleotide-peptide primer for the genomic RNA replication.</text>
</comment>
<comment type="similarity">
    <text evidence="14">Belongs to the picornaviruses polyprotein family.</text>
</comment>
<comment type="online information" name="Virus Particle ExploreR db">
    <link uri="https://viperdb.org/Info_Page.php?VDB=1jew"/>
    <text>Icosahedral capsid structure</text>
</comment>
<comment type="online information" name="Virus Particle ExploreR db">
    <link uri="https://viperdb.org/Info_Page.php?VDB=1cov"/>
    <text>Icosahedral capsid structure</text>
</comment>
<evidence type="ECO:0000250" key="1">
    <source>
        <dbReference type="UniProtKB" id="B9VUU3"/>
    </source>
</evidence>
<evidence type="ECO:0000250" key="2">
    <source>
        <dbReference type="UniProtKB" id="P03300"/>
    </source>
</evidence>
<evidence type="ECO:0000250" key="3">
    <source>
        <dbReference type="UniProtKB" id="P03301"/>
    </source>
</evidence>
<evidence type="ECO:0000250" key="4">
    <source>
        <dbReference type="UniProtKB" id="P03303"/>
    </source>
</evidence>
<evidence type="ECO:0000250" key="5">
    <source>
        <dbReference type="UniProtKB" id="P03313"/>
    </source>
</evidence>
<evidence type="ECO:0000250" key="6">
    <source>
        <dbReference type="UniProtKB" id="P04936"/>
    </source>
</evidence>
<evidence type="ECO:0000250" key="7">
    <source>
        <dbReference type="UniProtKB" id="Q66478"/>
    </source>
</evidence>
<evidence type="ECO:0000250" key="8">
    <source>
        <dbReference type="UniProtKB" id="Q9QF31"/>
    </source>
</evidence>
<evidence type="ECO:0000255" key="9"/>
<evidence type="ECO:0000255" key="10">
    <source>
        <dbReference type="PROSITE-ProRule" id="PRU00539"/>
    </source>
</evidence>
<evidence type="ECO:0000255" key="11">
    <source>
        <dbReference type="PROSITE-ProRule" id="PRU00551"/>
    </source>
</evidence>
<evidence type="ECO:0000255" key="12">
    <source>
        <dbReference type="PROSITE-ProRule" id="PRU01222"/>
    </source>
</evidence>
<evidence type="ECO:0000269" key="13">
    <source>
    </source>
</evidence>
<evidence type="ECO:0000305" key="14"/>
<evidence type="ECO:0007829" key="15">
    <source>
        <dbReference type="PDB" id="1COV"/>
    </source>
</evidence>